<gene>
    <name evidence="1" type="primary">obg</name>
    <name type="ordered locus">MAE_57610</name>
</gene>
<organism>
    <name type="scientific">Microcystis aeruginosa (strain NIES-843 / IAM M-2473)</name>
    <dbReference type="NCBI Taxonomy" id="449447"/>
    <lineage>
        <taxon>Bacteria</taxon>
        <taxon>Bacillati</taxon>
        <taxon>Cyanobacteriota</taxon>
        <taxon>Cyanophyceae</taxon>
        <taxon>Oscillatoriophycideae</taxon>
        <taxon>Chroococcales</taxon>
        <taxon>Microcystaceae</taxon>
        <taxon>Microcystis</taxon>
    </lineage>
</organism>
<accession>B0JI21</accession>
<name>OBG_MICAN</name>
<protein>
    <recommendedName>
        <fullName evidence="1">GTPase Obg</fullName>
        <ecNumber evidence="1">3.6.5.-</ecNumber>
    </recommendedName>
    <alternativeName>
        <fullName evidence="1">GTP-binding protein Obg</fullName>
    </alternativeName>
</protein>
<comment type="function">
    <text evidence="1">An essential GTPase which binds GTP, GDP and possibly (p)ppGpp with moderate affinity, with high nucleotide exchange rates and a fairly low GTP hydrolysis rate. Plays a role in control of the cell cycle, stress response, ribosome biogenesis and in those bacteria that undergo differentiation, in morphogenesis control.</text>
</comment>
<comment type="cofactor">
    <cofactor evidence="1">
        <name>Mg(2+)</name>
        <dbReference type="ChEBI" id="CHEBI:18420"/>
    </cofactor>
</comment>
<comment type="subunit">
    <text evidence="1">Monomer.</text>
</comment>
<comment type="subcellular location">
    <subcellularLocation>
        <location evidence="1">Cytoplasm</location>
    </subcellularLocation>
</comment>
<comment type="similarity">
    <text evidence="1">Belongs to the TRAFAC class OBG-HflX-like GTPase superfamily. OBG GTPase family.</text>
</comment>
<sequence>MQFIDRAEIEVEGGKGGDGIVAFRREKYVPAGGPAGGNGGKGGSVIFVATQNLQTLLDFQYSRYFKADDGKRGGPNNCTGANGSDRIIKVPCGTVVYDLDSEEIIGDLVTPEQTLIVAAGGKGGLGNRHFLSNNNRAPEYALPGLEGEKRHLRLELKLLAEVGIIGLPNAGKSTLISAVSSARPKIADYPFTTLIPNLGVVRKPTGDGTVFADIPGLIEGAHLGIGLGHEFLRHIERTRLLIHLVSLTSEDPIADYQIIQGELAAYGRGLEKRSQILVFNKIDAVDEETIDNYQKQFAKITNAEILTISAVTGAGLTTLLAKVWQQLEQLERVEDETPSLFS</sequence>
<evidence type="ECO:0000255" key="1">
    <source>
        <dbReference type="HAMAP-Rule" id="MF_01454"/>
    </source>
</evidence>
<evidence type="ECO:0000255" key="2">
    <source>
        <dbReference type="PROSITE-ProRule" id="PRU01231"/>
    </source>
</evidence>
<keyword id="KW-0963">Cytoplasm</keyword>
<keyword id="KW-0342">GTP-binding</keyword>
<keyword id="KW-0378">Hydrolase</keyword>
<keyword id="KW-0460">Magnesium</keyword>
<keyword id="KW-0479">Metal-binding</keyword>
<keyword id="KW-0547">Nucleotide-binding</keyword>
<dbReference type="EC" id="3.6.5.-" evidence="1"/>
<dbReference type="EMBL" id="AP009552">
    <property type="protein sequence ID" value="BAG05583.1"/>
    <property type="molecule type" value="Genomic_DNA"/>
</dbReference>
<dbReference type="SMR" id="B0JI21"/>
<dbReference type="STRING" id="449447.MAE_57610"/>
<dbReference type="PaxDb" id="449447-MAE_57610"/>
<dbReference type="EnsemblBacteria" id="BAG05583">
    <property type="protein sequence ID" value="BAG05583"/>
    <property type="gene ID" value="MAE_57610"/>
</dbReference>
<dbReference type="KEGG" id="mar:MAE_57610"/>
<dbReference type="PATRIC" id="fig|449447.4.peg.5268"/>
<dbReference type="eggNOG" id="COG0536">
    <property type="taxonomic scope" value="Bacteria"/>
</dbReference>
<dbReference type="HOGENOM" id="CLU_011747_2_0_3"/>
<dbReference type="BioCyc" id="MAER449447:MAE_RS25100-MONOMER"/>
<dbReference type="Proteomes" id="UP000001510">
    <property type="component" value="Chromosome"/>
</dbReference>
<dbReference type="GO" id="GO:0005737">
    <property type="term" value="C:cytoplasm"/>
    <property type="evidence" value="ECO:0007669"/>
    <property type="project" value="UniProtKB-SubCell"/>
</dbReference>
<dbReference type="GO" id="GO:0005525">
    <property type="term" value="F:GTP binding"/>
    <property type="evidence" value="ECO:0007669"/>
    <property type="project" value="UniProtKB-UniRule"/>
</dbReference>
<dbReference type="GO" id="GO:0003924">
    <property type="term" value="F:GTPase activity"/>
    <property type="evidence" value="ECO:0007669"/>
    <property type="project" value="UniProtKB-UniRule"/>
</dbReference>
<dbReference type="GO" id="GO:0000287">
    <property type="term" value="F:magnesium ion binding"/>
    <property type="evidence" value="ECO:0007669"/>
    <property type="project" value="InterPro"/>
</dbReference>
<dbReference type="GO" id="GO:0042254">
    <property type="term" value="P:ribosome biogenesis"/>
    <property type="evidence" value="ECO:0007669"/>
    <property type="project" value="UniProtKB-UniRule"/>
</dbReference>
<dbReference type="CDD" id="cd01898">
    <property type="entry name" value="Obg"/>
    <property type="match status" value="1"/>
</dbReference>
<dbReference type="FunFam" id="2.70.210.12:FF:000001">
    <property type="entry name" value="GTPase Obg"/>
    <property type="match status" value="1"/>
</dbReference>
<dbReference type="Gene3D" id="2.70.210.12">
    <property type="entry name" value="GTP1/OBG domain"/>
    <property type="match status" value="1"/>
</dbReference>
<dbReference type="Gene3D" id="3.40.50.300">
    <property type="entry name" value="P-loop containing nucleotide triphosphate hydrolases"/>
    <property type="match status" value="1"/>
</dbReference>
<dbReference type="HAMAP" id="MF_01454">
    <property type="entry name" value="GTPase_Obg"/>
    <property type="match status" value="1"/>
</dbReference>
<dbReference type="InterPro" id="IPR031167">
    <property type="entry name" value="G_OBG"/>
</dbReference>
<dbReference type="InterPro" id="IPR006073">
    <property type="entry name" value="GTP-bd"/>
</dbReference>
<dbReference type="InterPro" id="IPR014100">
    <property type="entry name" value="GTP-bd_Obg/CgtA"/>
</dbReference>
<dbReference type="InterPro" id="IPR006074">
    <property type="entry name" value="GTP1-OBG_CS"/>
</dbReference>
<dbReference type="InterPro" id="IPR006169">
    <property type="entry name" value="GTP1_OBG_dom"/>
</dbReference>
<dbReference type="InterPro" id="IPR036726">
    <property type="entry name" value="GTP1_OBG_dom_sf"/>
</dbReference>
<dbReference type="InterPro" id="IPR045086">
    <property type="entry name" value="OBG_GTPase"/>
</dbReference>
<dbReference type="InterPro" id="IPR027417">
    <property type="entry name" value="P-loop_NTPase"/>
</dbReference>
<dbReference type="InterPro" id="IPR005225">
    <property type="entry name" value="Small_GTP-bd"/>
</dbReference>
<dbReference type="NCBIfam" id="TIGR02729">
    <property type="entry name" value="Obg_CgtA"/>
    <property type="match status" value="1"/>
</dbReference>
<dbReference type="NCBIfam" id="NF008955">
    <property type="entry name" value="PRK12297.1"/>
    <property type="match status" value="1"/>
</dbReference>
<dbReference type="NCBIfam" id="NF008956">
    <property type="entry name" value="PRK12299.1"/>
    <property type="match status" value="1"/>
</dbReference>
<dbReference type="NCBIfam" id="TIGR00231">
    <property type="entry name" value="small_GTP"/>
    <property type="match status" value="1"/>
</dbReference>
<dbReference type="PANTHER" id="PTHR11702">
    <property type="entry name" value="DEVELOPMENTALLY REGULATED GTP-BINDING PROTEIN-RELATED"/>
    <property type="match status" value="1"/>
</dbReference>
<dbReference type="PANTHER" id="PTHR11702:SF31">
    <property type="entry name" value="MITOCHONDRIAL RIBOSOME-ASSOCIATED GTPASE 2"/>
    <property type="match status" value="1"/>
</dbReference>
<dbReference type="Pfam" id="PF01018">
    <property type="entry name" value="GTP1_OBG"/>
    <property type="match status" value="1"/>
</dbReference>
<dbReference type="Pfam" id="PF01926">
    <property type="entry name" value="MMR_HSR1"/>
    <property type="match status" value="1"/>
</dbReference>
<dbReference type="PIRSF" id="PIRSF002401">
    <property type="entry name" value="GTP_bd_Obg/CgtA"/>
    <property type="match status" value="1"/>
</dbReference>
<dbReference type="PRINTS" id="PR00326">
    <property type="entry name" value="GTP1OBG"/>
</dbReference>
<dbReference type="SUPFAM" id="SSF82051">
    <property type="entry name" value="Obg GTP-binding protein N-terminal domain"/>
    <property type="match status" value="1"/>
</dbReference>
<dbReference type="SUPFAM" id="SSF52540">
    <property type="entry name" value="P-loop containing nucleoside triphosphate hydrolases"/>
    <property type="match status" value="1"/>
</dbReference>
<dbReference type="PROSITE" id="PS51710">
    <property type="entry name" value="G_OBG"/>
    <property type="match status" value="1"/>
</dbReference>
<dbReference type="PROSITE" id="PS00905">
    <property type="entry name" value="GTP1_OBG"/>
    <property type="match status" value="1"/>
</dbReference>
<dbReference type="PROSITE" id="PS51883">
    <property type="entry name" value="OBG"/>
    <property type="match status" value="1"/>
</dbReference>
<proteinExistence type="inferred from homology"/>
<reference key="1">
    <citation type="journal article" date="2007" name="DNA Res.">
        <title>Complete genomic structure of the bloom-forming toxic cyanobacterium Microcystis aeruginosa NIES-843.</title>
        <authorList>
            <person name="Kaneko T."/>
            <person name="Nakajima N."/>
            <person name="Okamoto S."/>
            <person name="Suzuki I."/>
            <person name="Tanabe Y."/>
            <person name="Tamaoki M."/>
            <person name="Nakamura Y."/>
            <person name="Kasai F."/>
            <person name="Watanabe A."/>
            <person name="Kawashima K."/>
            <person name="Kishida Y."/>
            <person name="Ono A."/>
            <person name="Shimizu Y."/>
            <person name="Takahashi C."/>
            <person name="Minami C."/>
            <person name="Fujishiro T."/>
            <person name="Kohara M."/>
            <person name="Katoh M."/>
            <person name="Nakazaki N."/>
            <person name="Nakayama S."/>
            <person name="Yamada M."/>
            <person name="Tabata S."/>
            <person name="Watanabe M.M."/>
        </authorList>
    </citation>
    <scope>NUCLEOTIDE SEQUENCE [LARGE SCALE GENOMIC DNA]</scope>
    <source>
        <strain>NIES-843 / IAM M-247</strain>
    </source>
</reference>
<feature type="chain" id="PRO_0000386047" description="GTPase Obg">
    <location>
        <begin position="1"/>
        <end position="342"/>
    </location>
</feature>
<feature type="domain" description="Obg" evidence="2">
    <location>
        <begin position="1"/>
        <end position="159"/>
    </location>
</feature>
<feature type="domain" description="OBG-type G" evidence="1">
    <location>
        <begin position="160"/>
        <end position="328"/>
    </location>
</feature>
<feature type="binding site" evidence="1">
    <location>
        <begin position="166"/>
        <end position="173"/>
    </location>
    <ligand>
        <name>GTP</name>
        <dbReference type="ChEBI" id="CHEBI:37565"/>
    </ligand>
</feature>
<feature type="binding site" evidence="1">
    <location>
        <position position="173"/>
    </location>
    <ligand>
        <name>Mg(2+)</name>
        <dbReference type="ChEBI" id="CHEBI:18420"/>
    </ligand>
</feature>
<feature type="binding site" evidence="1">
    <location>
        <begin position="191"/>
        <end position="195"/>
    </location>
    <ligand>
        <name>GTP</name>
        <dbReference type="ChEBI" id="CHEBI:37565"/>
    </ligand>
</feature>
<feature type="binding site" evidence="1">
    <location>
        <position position="193"/>
    </location>
    <ligand>
        <name>Mg(2+)</name>
        <dbReference type="ChEBI" id="CHEBI:18420"/>
    </ligand>
</feature>
<feature type="binding site" evidence="1">
    <location>
        <begin position="213"/>
        <end position="216"/>
    </location>
    <ligand>
        <name>GTP</name>
        <dbReference type="ChEBI" id="CHEBI:37565"/>
    </ligand>
</feature>
<feature type="binding site" evidence="1">
    <location>
        <begin position="280"/>
        <end position="283"/>
    </location>
    <ligand>
        <name>GTP</name>
        <dbReference type="ChEBI" id="CHEBI:37565"/>
    </ligand>
</feature>
<feature type="binding site" evidence="1">
    <location>
        <begin position="309"/>
        <end position="311"/>
    </location>
    <ligand>
        <name>GTP</name>
        <dbReference type="ChEBI" id="CHEBI:37565"/>
    </ligand>
</feature>